<name>FETP_XANAC</name>
<proteinExistence type="inferred from homology"/>
<feature type="chain" id="PRO_0000214514" description="Probable Fe(2+)-trafficking protein">
    <location>
        <begin position="1"/>
        <end position="91"/>
    </location>
</feature>
<evidence type="ECO:0000255" key="1">
    <source>
        <dbReference type="HAMAP-Rule" id="MF_00686"/>
    </source>
</evidence>
<protein>
    <recommendedName>
        <fullName evidence="1">Probable Fe(2+)-trafficking protein</fullName>
    </recommendedName>
</protein>
<gene>
    <name type="ordered locus">XAC2554</name>
</gene>
<reference key="1">
    <citation type="journal article" date="2002" name="Nature">
        <title>Comparison of the genomes of two Xanthomonas pathogens with differing host specificities.</title>
        <authorList>
            <person name="da Silva A.C.R."/>
            <person name="Ferro J.A."/>
            <person name="Reinach F.C."/>
            <person name="Farah C.S."/>
            <person name="Furlan L.R."/>
            <person name="Quaggio R.B."/>
            <person name="Monteiro-Vitorello C.B."/>
            <person name="Van Sluys M.A."/>
            <person name="Almeida N.F. Jr."/>
            <person name="Alves L.M.C."/>
            <person name="do Amaral A.M."/>
            <person name="Bertolini M.C."/>
            <person name="Camargo L.E.A."/>
            <person name="Camarotte G."/>
            <person name="Cannavan F."/>
            <person name="Cardozo J."/>
            <person name="Chambergo F."/>
            <person name="Ciapina L.P."/>
            <person name="Cicarelli R.M.B."/>
            <person name="Coutinho L.L."/>
            <person name="Cursino-Santos J.R."/>
            <person name="El-Dorry H."/>
            <person name="Faria J.B."/>
            <person name="Ferreira A.J.S."/>
            <person name="Ferreira R.C.C."/>
            <person name="Ferro M.I.T."/>
            <person name="Formighieri E.F."/>
            <person name="Franco M.C."/>
            <person name="Greggio C.C."/>
            <person name="Gruber A."/>
            <person name="Katsuyama A.M."/>
            <person name="Kishi L.T."/>
            <person name="Leite R.P."/>
            <person name="Lemos E.G.M."/>
            <person name="Lemos M.V.F."/>
            <person name="Locali E.C."/>
            <person name="Machado M.A."/>
            <person name="Madeira A.M.B.N."/>
            <person name="Martinez-Rossi N.M."/>
            <person name="Martins E.C."/>
            <person name="Meidanis J."/>
            <person name="Menck C.F.M."/>
            <person name="Miyaki C.Y."/>
            <person name="Moon D.H."/>
            <person name="Moreira L.M."/>
            <person name="Novo M.T.M."/>
            <person name="Okura V.K."/>
            <person name="Oliveira M.C."/>
            <person name="Oliveira V.R."/>
            <person name="Pereira H.A."/>
            <person name="Rossi A."/>
            <person name="Sena J.A.D."/>
            <person name="Silva C."/>
            <person name="de Souza R.F."/>
            <person name="Spinola L.A.F."/>
            <person name="Takita M.A."/>
            <person name="Tamura R.E."/>
            <person name="Teixeira E.C."/>
            <person name="Tezza R.I.D."/>
            <person name="Trindade dos Santos M."/>
            <person name="Truffi D."/>
            <person name="Tsai S.M."/>
            <person name="White F.F."/>
            <person name="Setubal J.C."/>
            <person name="Kitajima J.P."/>
        </authorList>
    </citation>
    <scope>NUCLEOTIDE SEQUENCE [LARGE SCALE GENOMIC DNA]</scope>
    <source>
        <strain>306</strain>
    </source>
</reference>
<keyword id="KW-0408">Iron</keyword>
<comment type="function">
    <text evidence="1">Could be a mediator in iron transactions between iron acquisition and iron-requiring processes, such as synthesis and/or repair of Fe-S clusters in biosynthetic enzymes.</text>
</comment>
<comment type="similarity">
    <text evidence="1">Belongs to the Fe(2+)-trafficking protein family.</text>
</comment>
<organism>
    <name type="scientific">Xanthomonas axonopodis pv. citri (strain 306)</name>
    <dbReference type="NCBI Taxonomy" id="190486"/>
    <lineage>
        <taxon>Bacteria</taxon>
        <taxon>Pseudomonadati</taxon>
        <taxon>Pseudomonadota</taxon>
        <taxon>Gammaproteobacteria</taxon>
        <taxon>Lysobacterales</taxon>
        <taxon>Lysobacteraceae</taxon>
        <taxon>Xanthomonas</taxon>
    </lineage>
</organism>
<dbReference type="EMBL" id="AE008923">
    <property type="protein sequence ID" value="AAM37405.1"/>
    <property type="molecule type" value="Genomic_DNA"/>
</dbReference>
<dbReference type="RefSeq" id="WP_005914056.1">
    <property type="nucleotide sequence ID" value="NC_003919.1"/>
</dbReference>
<dbReference type="SMR" id="Q8PJH7"/>
<dbReference type="KEGG" id="xac:XAC2554"/>
<dbReference type="eggNOG" id="COG2924">
    <property type="taxonomic scope" value="Bacteria"/>
</dbReference>
<dbReference type="HOGENOM" id="CLU_170994_0_0_6"/>
<dbReference type="Proteomes" id="UP000000576">
    <property type="component" value="Chromosome"/>
</dbReference>
<dbReference type="GO" id="GO:0005829">
    <property type="term" value="C:cytosol"/>
    <property type="evidence" value="ECO:0007669"/>
    <property type="project" value="TreeGrafter"/>
</dbReference>
<dbReference type="GO" id="GO:0005506">
    <property type="term" value="F:iron ion binding"/>
    <property type="evidence" value="ECO:0007669"/>
    <property type="project" value="UniProtKB-UniRule"/>
</dbReference>
<dbReference type="GO" id="GO:0034599">
    <property type="term" value="P:cellular response to oxidative stress"/>
    <property type="evidence" value="ECO:0007669"/>
    <property type="project" value="TreeGrafter"/>
</dbReference>
<dbReference type="FunFam" id="1.10.3880.10:FF:000001">
    <property type="entry name" value="Probable Fe(2+)-trafficking protein"/>
    <property type="match status" value="1"/>
</dbReference>
<dbReference type="Gene3D" id="1.10.3880.10">
    <property type="entry name" value="Fe(II) trafficking protein YggX"/>
    <property type="match status" value="1"/>
</dbReference>
<dbReference type="HAMAP" id="MF_00686">
    <property type="entry name" value="Fe_traffic_YggX"/>
    <property type="match status" value="1"/>
</dbReference>
<dbReference type="InterPro" id="IPR007457">
    <property type="entry name" value="Fe_traffick_prot_YggX"/>
</dbReference>
<dbReference type="InterPro" id="IPR036766">
    <property type="entry name" value="Fe_traffick_prot_YggX_sf"/>
</dbReference>
<dbReference type="NCBIfam" id="NF003817">
    <property type="entry name" value="PRK05408.1"/>
    <property type="match status" value="1"/>
</dbReference>
<dbReference type="PANTHER" id="PTHR36965">
    <property type="entry name" value="FE(2+)-TRAFFICKING PROTEIN-RELATED"/>
    <property type="match status" value="1"/>
</dbReference>
<dbReference type="PANTHER" id="PTHR36965:SF1">
    <property type="entry name" value="FE(2+)-TRAFFICKING PROTEIN-RELATED"/>
    <property type="match status" value="1"/>
</dbReference>
<dbReference type="Pfam" id="PF04362">
    <property type="entry name" value="Iron_traffic"/>
    <property type="match status" value="1"/>
</dbReference>
<dbReference type="PIRSF" id="PIRSF029827">
    <property type="entry name" value="Fe_traffic_YggX"/>
    <property type="match status" value="1"/>
</dbReference>
<dbReference type="SUPFAM" id="SSF111148">
    <property type="entry name" value="YggX-like"/>
    <property type="match status" value="1"/>
</dbReference>
<sequence>MSRTVFCHYQQSDAEGLDFVPYPGELGQRIFAQIGKNAWQAWLAHQTMLINENRLSPRDPKHRAFLEAELQKFLFERNADKPEGYVAPVGD</sequence>
<accession>Q8PJH7</accession>